<reference key="1">
    <citation type="journal article" date="1995" name="Oncogene">
        <title>Cloning of the mouse homologue of the deleted in colorectal cancer gene (mDCC) and its expression in the developing mouse embryo.</title>
        <authorList>
            <person name="Cooper H.M."/>
            <person name="Armes P."/>
            <person name="Britto J."/>
            <person name="Gad J."/>
            <person name="Wilks A.F."/>
        </authorList>
    </citation>
    <scope>NUCLEOTIDE SEQUENCE [MRNA] (ISOFORMS A; B AND C)</scope>
    <source>
        <strain>BALB/cJ</strain>
        <tissue>Brain</tissue>
    </source>
</reference>
<reference key="2">
    <citation type="submission" date="1996-06" db="EMBL/GenBank/DDBJ databases">
        <authorList>
            <person name="Cooper H.M."/>
        </authorList>
    </citation>
    <scope>SEQUENCE REVISION</scope>
</reference>
<reference key="3">
    <citation type="journal article" date="2009" name="PLoS Biol.">
        <title>Lineage-specific biology revealed by a finished genome assembly of the mouse.</title>
        <authorList>
            <person name="Church D.M."/>
            <person name="Goodstadt L."/>
            <person name="Hillier L.W."/>
            <person name="Zody M.C."/>
            <person name="Goldstein S."/>
            <person name="She X."/>
            <person name="Bult C.J."/>
            <person name="Agarwala R."/>
            <person name="Cherry J.L."/>
            <person name="DiCuccio M."/>
            <person name="Hlavina W."/>
            <person name="Kapustin Y."/>
            <person name="Meric P."/>
            <person name="Maglott D."/>
            <person name="Birtle Z."/>
            <person name="Marques A.C."/>
            <person name="Graves T."/>
            <person name="Zhou S."/>
            <person name="Teague B."/>
            <person name="Potamousis K."/>
            <person name="Churas C."/>
            <person name="Place M."/>
            <person name="Herschleb J."/>
            <person name="Runnheim R."/>
            <person name="Forrest D."/>
            <person name="Amos-Landgraf J."/>
            <person name="Schwartz D.C."/>
            <person name="Cheng Z."/>
            <person name="Lindblad-Toh K."/>
            <person name="Eichler E.E."/>
            <person name="Ponting C.P."/>
        </authorList>
    </citation>
    <scope>NUCLEOTIDE SEQUENCE [LARGE SCALE GENOMIC DNA]</scope>
    <source>
        <strain>C57BL/6J</strain>
    </source>
</reference>
<reference key="4">
    <citation type="submission" date="2005-07" db="EMBL/GenBank/DDBJ databases">
        <authorList>
            <person name="Mural R.J."/>
            <person name="Adams M.D."/>
            <person name="Myers E.W."/>
            <person name="Smith H.O."/>
            <person name="Venter J.C."/>
        </authorList>
    </citation>
    <scope>NUCLEOTIDE SEQUENCE [LARGE SCALE GENOMIC DNA]</scope>
</reference>
<reference key="5">
    <citation type="journal article" date="2004" name="Nat. Neurosci.">
        <title>Activation of FAK and Src are receptor-proximal events required for netrin signaling.</title>
        <authorList>
            <person name="Li W."/>
            <person name="Lee J."/>
            <person name="Vikis H.G."/>
            <person name="Lee S.H."/>
            <person name="Liu G."/>
            <person name="Aurandt J."/>
            <person name="Shen T.L."/>
            <person name="Fearon E.R."/>
            <person name="Guan J.L."/>
            <person name="Han M."/>
            <person name="Rao Y."/>
            <person name="Hong K."/>
            <person name="Guan K.L."/>
        </authorList>
    </citation>
    <scope>INTERACTION WITH PTK2/FAK1</scope>
</reference>
<reference key="6">
    <citation type="journal article" date="2008" name="Cell">
        <title>DSCAM is a netrin receptor that collaborates with DCC in mediating turning responses to netrin-1.</title>
        <authorList>
            <person name="Ly A."/>
            <person name="Nikolaev A."/>
            <person name="Suresh G."/>
            <person name="Zheng Y."/>
            <person name="Tessier-Lavigne M."/>
            <person name="Stein E."/>
        </authorList>
    </citation>
    <scope>INTERACTION WITH DSCAM</scope>
</reference>
<reference key="7">
    <citation type="journal article" date="2010" name="Cell">
        <title>A tissue-specific atlas of mouse protein phosphorylation and expression.</title>
        <authorList>
            <person name="Huttlin E.L."/>
            <person name="Jedrychowski M.P."/>
            <person name="Elias J.E."/>
            <person name="Goswami T."/>
            <person name="Rad R."/>
            <person name="Beausoleil S.A."/>
            <person name="Villen J."/>
            <person name="Haas W."/>
            <person name="Sowa M.E."/>
            <person name="Gygi S.P."/>
        </authorList>
    </citation>
    <scope>IDENTIFICATION BY MASS SPECTROMETRY [LARGE SCALE ANALYSIS]</scope>
    <source>
        <tissue>Brain</tissue>
    </source>
</reference>
<reference key="8">
    <citation type="journal article" date="2012" name="J. Neurochem.">
        <title>The Cbln family of proteins interact with multiple signaling pathways.</title>
        <authorList>
            <person name="Wei P."/>
            <person name="Pattarini R."/>
            <person name="Rong Y."/>
            <person name="Guo H."/>
            <person name="Bansal P.K."/>
            <person name="Kusnoor S.V."/>
            <person name="Deutch A.Y."/>
            <person name="Parris J."/>
            <person name="Morgan J.I."/>
        </authorList>
    </citation>
    <scope>INTERACTION WITH CBLN4</scope>
</reference>
<reference key="9">
    <citation type="journal article" date="2017" name="Nat. Genet.">
        <title>Biallelic mutations in human DCC cause developmental split-brain syndrome.</title>
        <authorList>
            <person name="Jamuar S.S."/>
            <person name="Schmitz-Abe K."/>
            <person name="D'Gama A.M."/>
            <person name="Drottar M."/>
            <person name="Chan W.M."/>
            <person name="Peeva M."/>
            <person name="Servattalab S."/>
            <person name="Lam A.N."/>
            <person name="Delgado M.R."/>
            <person name="Clegg N.J."/>
            <person name="Zayed Z.A."/>
            <person name="Dogar M.A."/>
            <person name="Alorainy I.A."/>
            <person name="Jamea A.A."/>
            <person name="Abu-Amero K."/>
            <person name="Griebel M."/>
            <person name="Ward W."/>
            <person name="Lein E.S."/>
            <person name="Markianos K."/>
            <person name="Barkovich A.J."/>
            <person name="Robson C.D."/>
            <person name="Grant P.E."/>
            <person name="Bosley T.M."/>
            <person name="Engle E.C."/>
            <person name="Walsh C.A."/>
            <person name="Yu T.W."/>
        </authorList>
    </citation>
    <scope>TISSUE SPECIFICITY</scope>
</reference>
<reference key="10">
    <citation type="journal article" date="2018" name="Brain Res.">
        <title>Glycosylation of Cblns attenuates their receptor binding.</title>
        <authorList>
            <person name="Rong Y."/>
            <person name="Bansal P.K."/>
            <person name="Wei P."/>
            <person name="Guo H."/>
            <person name="Correia K."/>
            <person name="Parris J."/>
            <person name="Morgan J.I."/>
        </authorList>
    </citation>
    <scope>INTERACTION WITH CBLN4</scope>
</reference>
<reference key="11">
    <citation type="journal article" date="2011" name="Proc. Natl. Acad. Sci. U.S.A.">
        <title>Cargo recognition mechanism of myosin X revealed by the structure of its tail MyTH4-FERM tandem in complex with the DCC P3 domain.</title>
        <authorList>
            <person name="Wei Z."/>
            <person name="Yan J."/>
            <person name="Lu Q."/>
            <person name="Pan L."/>
            <person name="Zhang M."/>
        </authorList>
    </citation>
    <scope>X-RAY CRYSTALLOGRAPHY (2.5 ANGSTROMS) OF 1410-1445 IN COMPLEX WITH MYO10</scope>
    <scope>INTERACTION WITH MYO10</scope>
</reference>
<feature type="signal peptide" evidence="3">
    <location>
        <begin position="1"/>
        <end position="25"/>
    </location>
</feature>
<feature type="chain" id="PRO_0000014745" description="Netrin receptor DCC">
    <location>
        <begin position="26"/>
        <end position="1447"/>
    </location>
</feature>
<feature type="topological domain" description="Extracellular" evidence="3">
    <location>
        <begin position="26"/>
        <end position="1097"/>
    </location>
</feature>
<feature type="transmembrane region" description="Helical" evidence="3">
    <location>
        <begin position="1098"/>
        <end position="1122"/>
    </location>
</feature>
<feature type="topological domain" description="Cytoplasmic" evidence="3">
    <location>
        <begin position="1123"/>
        <end position="1447"/>
    </location>
</feature>
<feature type="domain" description="Ig-like C2-type 1">
    <location>
        <begin position="36"/>
        <end position="135"/>
    </location>
</feature>
<feature type="domain" description="Ig-like C2-type 2">
    <location>
        <begin position="139"/>
        <end position="229"/>
    </location>
</feature>
<feature type="domain" description="Ig-like C2-type 3">
    <location>
        <begin position="234"/>
        <end position="326"/>
    </location>
</feature>
<feature type="domain" description="Ig-like C2-type 4">
    <location>
        <begin position="331"/>
        <end position="416"/>
    </location>
</feature>
<feature type="domain" description="Fibronectin type-III 1" evidence="5">
    <location>
        <begin position="431"/>
        <end position="524"/>
    </location>
</feature>
<feature type="domain" description="Fibronectin type-III 2" evidence="5">
    <location>
        <begin position="530"/>
        <end position="620"/>
    </location>
</feature>
<feature type="domain" description="Fibronectin type-III 3" evidence="5">
    <location>
        <begin position="625"/>
        <end position="718"/>
    </location>
</feature>
<feature type="domain" description="Fibronectin type-III 4" evidence="5">
    <location>
        <begin position="728"/>
        <end position="821"/>
    </location>
</feature>
<feature type="domain" description="Fibronectin type-III 5" evidence="5">
    <location>
        <begin position="846"/>
        <end position="942"/>
    </location>
</feature>
<feature type="domain" description="Fibronectin type-III 6" evidence="5">
    <location>
        <begin position="947"/>
        <end position="1044"/>
    </location>
</feature>
<feature type="region of interest" description="Disordered" evidence="6">
    <location>
        <begin position="1126"/>
        <end position="1153"/>
    </location>
</feature>
<feature type="region of interest" description="Disordered" evidence="6">
    <location>
        <begin position="1166"/>
        <end position="1220"/>
    </location>
</feature>
<feature type="region of interest" description="Disordered" evidence="6">
    <location>
        <begin position="1291"/>
        <end position="1329"/>
    </location>
</feature>
<feature type="region of interest" description="Disordered" evidence="6">
    <location>
        <begin position="1394"/>
        <end position="1419"/>
    </location>
</feature>
<feature type="compositionally biased region" description="Basic residues" evidence="6">
    <location>
        <begin position="1129"/>
        <end position="1143"/>
    </location>
</feature>
<feature type="compositionally biased region" description="Basic and acidic residues" evidence="6">
    <location>
        <begin position="1144"/>
        <end position="1153"/>
    </location>
</feature>
<feature type="compositionally biased region" description="Polar residues" evidence="6">
    <location>
        <begin position="1179"/>
        <end position="1220"/>
    </location>
</feature>
<feature type="compositionally biased region" description="Polar residues" evidence="6">
    <location>
        <begin position="1297"/>
        <end position="1311"/>
    </location>
</feature>
<feature type="modified residue" description="Phosphoserine; by MAPK1" evidence="2">
    <location>
        <position position="1178"/>
    </location>
</feature>
<feature type="modified residue" description="Phosphothreonine; by MAPK1" evidence="2">
    <location>
        <position position="1187"/>
    </location>
</feature>
<feature type="modified residue" description="Phosphoserine; by MAPK1" evidence="2">
    <location>
        <position position="1267"/>
    </location>
</feature>
<feature type="glycosylation site" description="N-linked (GlcNAc...) asparagine" evidence="3">
    <location>
        <position position="60"/>
    </location>
</feature>
<feature type="glycosylation site" description="N-linked (GlcNAc...) asparagine" evidence="3">
    <location>
        <position position="94"/>
    </location>
</feature>
<feature type="glycosylation site" description="N-linked (GlcNAc...) asparagine" evidence="3">
    <location>
        <position position="299"/>
    </location>
</feature>
<feature type="glycosylation site" description="N-linked (GlcNAc...) asparagine" evidence="3">
    <location>
        <position position="318"/>
    </location>
</feature>
<feature type="glycosylation site" description="N-linked (GlcNAc...) asparagine" evidence="3">
    <location>
        <position position="478"/>
    </location>
</feature>
<feature type="glycosylation site" description="N-linked (GlcNAc...) asparagine" evidence="3">
    <location>
        <position position="628"/>
    </location>
</feature>
<feature type="glycosylation site" description="N-linked (GlcNAc...) asparagine" evidence="3">
    <location>
        <position position="702"/>
    </location>
</feature>
<feature type="disulfide bond" evidence="4">
    <location>
        <begin position="61"/>
        <end position="117"/>
    </location>
</feature>
<feature type="disulfide bond" evidence="4">
    <location>
        <begin position="161"/>
        <end position="212"/>
    </location>
</feature>
<feature type="disulfide bond" evidence="4">
    <location>
        <begin position="261"/>
        <end position="310"/>
    </location>
</feature>
<feature type="disulfide bond" evidence="4">
    <location>
        <begin position="352"/>
        <end position="400"/>
    </location>
</feature>
<feature type="splice variant" id="VSP_018807" description="In isoform B." evidence="13">
    <location>
        <begin position="1"/>
        <end position="84"/>
    </location>
</feature>
<feature type="splice variant" id="VSP_002501" description="In isoform C." evidence="13">
    <location>
        <begin position="819"/>
        <end position="838"/>
    </location>
</feature>
<feature type="sequence conflict" description="In Ref. 1; CAA59786." evidence="14" ref="1">
    <original>V</original>
    <variation>G</variation>
    <location>
        <position position="1138"/>
    </location>
</feature>
<feature type="strand" evidence="16">
    <location>
        <begin position="732"/>
        <end position="736"/>
    </location>
</feature>
<feature type="strand" evidence="16">
    <location>
        <begin position="741"/>
        <end position="745"/>
    </location>
</feature>
<feature type="strand" evidence="16">
    <location>
        <begin position="757"/>
        <end position="766"/>
    </location>
</feature>
<feature type="strand" evidence="16">
    <location>
        <begin position="769"/>
        <end position="773"/>
    </location>
</feature>
<feature type="strand" evidence="16">
    <location>
        <begin position="780"/>
        <end position="783"/>
    </location>
</feature>
<feature type="strand" evidence="16">
    <location>
        <begin position="791"/>
        <end position="800"/>
    </location>
</feature>
<feature type="strand" evidence="16">
    <location>
        <begin position="808"/>
        <end position="813"/>
    </location>
</feature>
<feature type="strand" evidence="16">
    <location>
        <begin position="848"/>
        <end position="854"/>
    </location>
</feature>
<feature type="strand" evidence="16">
    <location>
        <begin position="856"/>
        <end position="865"/>
    </location>
</feature>
<feature type="strand" evidence="16">
    <location>
        <begin position="880"/>
        <end position="887"/>
    </location>
</feature>
<feature type="strand" evidence="16">
    <location>
        <begin position="896"/>
        <end position="908"/>
    </location>
</feature>
<feature type="strand" evidence="16">
    <location>
        <begin position="915"/>
        <end position="924"/>
    </location>
</feature>
<feature type="strand" evidence="16">
    <location>
        <begin position="935"/>
        <end position="938"/>
    </location>
</feature>
<feature type="helix" evidence="15">
    <location>
        <begin position="1416"/>
        <end position="1421"/>
    </location>
</feature>
<feature type="helix" evidence="15">
    <location>
        <begin position="1425"/>
        <end position="1443"/>
    </location>
</feature>
<evidence type="ECO:0000250" key="1">
    <source>
        <dbReference type="UniProtKB" id="P43146"/>
    </source>
</evidence>
<evidence type="ECO:0000250" key="2">
    <source>
        <dbReference type="UniProtKB" id="Q63155"/>
    </source>
</evidence>
<evidence type="ECO:0000255" key="3"/>
<evidence type="ECO:0000255" key="4">
    <source>
        <dbReference type="PROSITE-ProRule" id="PRU00114"/>
    </source>
</evidence>
<evidence type="ECO:0000255" key="5">
    <source>
        <dbReference type="PROSITE-ProRule" id="PRU00316"/>
    </source>
</evidence>
<evidence type="ECO:0000256" key="6">
    <source>
        <dbReference type="SAM" id="MobiDB-lite"/>
    </source>
</evidence>
<evidence type="ECO:0000269" key="7">
    <source>
    </source>
</evidence>
<evidence type="ECO:0000269" key="8">
    <source>
    </source>
</evidence>
<evidence type="ECO:0000269" key="9">
    <source>
    </source>
</evidence>
<evidence type="ECO:0000269" key="10">
    <source>
    </source>
</evidence>
<evidence type="ECO:0000269" key="11">
    <source>
    </source>
</evidence>
<evidence type="ECO:0000269" key="12">
    <source>
    </source>
</evidence>
<evidence type="ECO:0000303" key="13">
    <source>
    </source>
</evidence>
<evidence type="ECO:0000305" key="14"/>
<evidence type="ECO:0007829" key="15">
    <source>
        <dbReference type="PDB" id="3PZD"/>
    </source>
</evidence>
<evidence type="ECO:0007829" key="16">
    <source>
        <dbReference type="PDB" id="4PLO"/>
    </source>
</evidence>
<name>DCC_MOUSE</name>
<comment type="function">
    <text>Receptor for netrin required for axon guidance. Mediates axon attraction of neuronal growth cones in the developing nervous system upon ligand binding. Its association with UNC5 proteins may trigger signaling for axon repulsion. It also acts as a dependence receptor required for apoptosis induction when not associated with netrin ligand. Implicated as a tumor suppressor gene.</text>
</comment>
<comment type="subunit">
    <text evidence="1 2 7 8 9 10 12">Interacts with the cytoplasmic part of UNC5A, UNC5B, UNC5C and probably UNC5D (By similarity). Interacts with MAPK1 (By similarity). Interacts with NTN1 (By similarity). Interacts with DSCAM (PubMed:18585357). Interacts with PTK2/FAK1 (PubMed:15494734). Interacts with MYO10 (PubMed:21321230). Interacts with CBLN4; this interaction can be competed by NTN1 (PubMed:22220752, PubMed:29782851). Interacts with SIAH1 and SIAH2 (By similarity).</text>
</comment>
<comment type="interaction">
    <interactant intactId="EBI-1798863">
        <id>P70211</id>
    </interactant>
    <interactant intactId="EBI-1798601">
        <id>Q9ERC8</id>
        <label>Dscam</label>
    </interactant>
    <organismsDiffer>false</organismsDiffer>
    <experiments>4</experiments>
</comment>
<comment type="interaction">
    <interactant intactId="EBI-1798863">
        <id>P70211</id>
    </interactant>
    <interactant intactId="EBI-1809712">
        <id>P56671</id>
        <label>Maz</label>
    </interactant>
    <organismsDiffer>false</organismsDiffer>
    <experiments>3</experiments>
</comment>
<comment type="interaction">
    <interactant intactId="EBI-1798863">
        <id>P70211</id>
    </interactant>
    <interactant intactId="EBI-1809742">
        <id>P56270</id>
        <label>MAZ</label>
    </interactant>
    <organismsDiffer>true</organismsDiffer>
    <experiments>2</experiments>
</comment>
<comment type="subcellular location">
    <subcellularLocation>
        <location>Membrane</location>
        <topology>Single-pass type I membrane protein</topology>
    </subcellularLocation>
</comment>
<comment type="alternative products">
    <event type="alternative splicing"/>
    <event type="alternative initiation"/>
    <isoform>
        <id>P70211-1</id>
        <name>A</name>
        <sequence type="displayed"/>
    </isoform>
    <isoform>
        <id>P70211-2</id>
        <name>C</name>
        <sequence type="described" ref="VSP_002501"/>
    </isoform>
    <isoform>
        <id>P70211-3</id>
        <name>B</name>
        <sequence type="described" ref="VSP_018807"/>
    </isoform>
</comment>
<comment type="tissue specificity">
    <text evidence="11">In the embryo, expressed at high levels in the developing brain and neural tube. In the embryo, expressed in developing neurons of the telencephalic cortical plate and in developing brainstem nuclei (PubMed:28250456). In adult, highly expressed in brain with very low levels found in testis, heart and thymus. Isoform C is expressed only in the embryo.</text>
</comment>
<comment type="developmental stage">
    <text>Low levels in early gestation. Highest levels expressed during mid gestation. Levels decrease in late gestation and remain at this level in the adult.</text>
</comment>
<comment type="PTM">
    <text evidence="1">Ubiquitinated; mediated by SIAH1 or SIAH2 and leading to its subsequent proteasomal degradation.</text>
</comment>
<comment type="miscellaneous">
    <molecule>Isoform B</molecule>
    <text evidence="14">Produced by alternative initiation at Met-85 of isoform A.</text>
</comment>
<comment type="similarity">
    <text evidence="14">Belongs to the immunoglobulin superfamily. DCC family.</text>
</comment>
<dbReference type="EMBL" id="X85788">
    <property type="protein sequence ID" value="CAA59786.1"/>
    <property type="molecule type" value="mRNA"/>
</dbReference>
<dbReference type="EMBL" id="AC105957">
    <property type="status" value="NOT_ANNOTATED_CDS"/>
    <property type="molecule type" value="Genomic_DNA"/>
</dbReference>
<dbReference type="EMBL" id="AC107230">
    <property type="status" value="NOT_ANNOTATED_CDS"/>
    <property type="molecule type" value="Genomic_DNA"/>
</dbReference>
<dbReference type="EMBL" id="AC109179">
    <property type="status" value="NOT_ANNOTATED_CDS"/>
    <property type="molecule type" value="Genomic_DNA"/>
</dbReference>
<dbReference type="EMBL" id="AC109499">
    <property type="status" value="NOT_ANNOTATED_CDS"/>
    <property type="molecule type" value="Genomic_DNA"/>
</dbReference>
<dbReference type="EMBL" id="AC121523">
    <property type="status" value="NOT_ANNOTATED_CDS"/>
    <property type="molecule type" value="Genomic_DNA"/>
</dbReference>
<dbReference type="EMBL" id="AC136637">
    <property type="status" value="NOT_ANNOTATED_CDS"/>
    <property type="molecule type" value="Genomic_DNA"/>
</dbReference>
<dbReference type="EMBL" id="AC161177">
    <property type="status" value="NOT_ANNOTATED_CDS"/>
    <property type="molecule type" value="Genomic_DNA"/>
</dbReference>
<dbReference type="EMBL" id="AC163492">
    <property type="status" value="NOT_ANNOTATED_CDS"/>
    <property type="molecule type" value="Genomic_DNA"/>
</dbReference>
<dbReference type="EMBL" id="AC167547">
    <property type="status" value="NOT_ANNOTATED_CDS"/>
    <property type="molecule type" value="Genomic_DNA"/>
</dbReference>
<dbReference type="EMBL" id="AC167548">
    <property type="status" value="NOT_ANNOTATED_CDS"/>
    <property type="molecule type" value="Genomic_DNA"/>
</dbReference>
<dbReference type="EMBL" id="AC167549">
    <property type="status" value="NOT_ANNOTATED_CDS"/>
    <property type="molecule type" value="Genomic_DNA"/>
</dbReference>
<dbReference type="EMBL" id="CH466528">
    <property type="protein sequence ID" value="EDL09563.1"/>
    <property type="molecule type" value="Genomic_DNA"/>
</dbReference>
<dbReference type="CCDS" id="CCDS29336.1">
    <molecule id="P70211-1"/>
</dbReference>
<dbReference type="RefSeq" id="NP_031857.2">
    <molecule id="P70211-1"/>
    <property type="nucleotide sequence ID" value="NM_007831.3"/>
</dbReference>
<dbReference type="RefSeq" id="XP_006525651.1">
    <molecule id="P70211-2"/>
    <property type="nucleotide sequence ID" value="XM_006525588.5"/>
</dbReference>
<dbReference type="PDB" id="3PZD">
    <property type="method" value="X-ray"/>
    <property type="resolution" value="2.50 A"/>
    <property type="chains" value="B=1410-1445"/>
</dbReference>
<dbReference type="PDB" id="4PLO">
    <property type="method" value="X-ray"/>
    <property type="resolution" value="2.90 A"/>
    <property type="chains" value="B=721-942"/>
</dbReference>
<dbReference type="PDBsum" id="3PZD"/>
<dbReference type="PDBsum" id="4PLO"/>
<dbReference type="SMR" id="P70211"/>
<dbReference type="BioGRID" id="199064">
    <property type="interactions" value="9"/>
</dbReference>
<dbReference type="DIP" id="DIP-46587N"/>
<dbReference type="FunCoup" id="P70211">
    <property type="interactions" value="319"/>
</dbReference>
<dbReference type="IntAct" id="P70211">
    <property type="interactions" value="13"/>
</dbReference>
<dbReference type="MINT" id="P70211"/>
<dbReference type="STRING" id="10090.ENSMUSP00000110593"/>
<dbReference type="GlyConnect" id="2534">
    <property type="glycosylation" value="3 N-Linked glycans (2 sites)"/>
</dbReference>
<dbReference type="GlyCosmos" id="P70211">
    <property type="glycosylation" value="7 sites, 3 glycans"/>
</dbReference>
<dbReference type="GlyGen" id="P70211">
    <property type="glycosylation" value="12 sites, 6 N-linked glycans (3 sites), 1 O-linked glycan (2 sites)"/>
</dbReference>
<dbReference type="iPTMnet" id="P70211"/>
<dbReference type="PhosphoSitePlus" id="P70211"/>
<dbReference type="jPOST" id="P70211"/>
<dbReference type="PaxDb" id="10090-ENSMUSP00000110593"/>
<dbReference type="PeptideAtlas" id="P70211"/>
<dbReference type="ProteomicsDB" id="279833">
    <molecule id="P70211-1"/>
</dbReference>
<dbReference type="ProteomicsDB" id="279834">
    <molecule id="P70211-2"/>
</dbReference>
<dbReference type="ProteomicsDB" id="279835">
    <molecule id="P70211-3"/>
</dbReference>
<dbReference type="Antibodypedia" id="3710">
    <property type="antibodies" value="308 antibodies from 39 providers"/>
</dbReference>
<dbReference type="DNASU" id="13176"/>
<dbReference type="Ensembl" id="ENSMUST00000073379.6">
    <molecule id="P70211-2"/>
    <property type="protein sequence ID" value="ENSMUSP00000073094.6"/>
    <property type="gene ID" value="ENSMUSG00000060534.17"/>
</dbReference>
<dbReference type="Ensembl" id="ENSMUST00000114943.11">
    <molecule id="P70211-1"/>
    <property type="protein sequence ID" value="ENSMUSP00000110593.4"/>
    <property type="gene ID" value="ENSMUSG00000060534.17"/>
</dbReference>
<dbReference type="GeneID" id="13176"/>
<dbReference type="KEGG" id="mmu:13176"/>
<dbReference type="UCSC" id="uc008fop.1">
    <molecule id="P70211-1"/>
    <property type="organism name" value="mouse"/>
</dbReference>
<dbReference type="UCSC" id="uc008foq.1">
    <molecule id="P70211-2"/>
    <property type="organism name" value="mouse"/>
</dbReference>
<dbReference type="AGR" id="MGI:94869"/>
<dbReference type="CTD" id="1630"/>
<dbReference type="MGI" id="MGI:94869">
    <property type="gene designation" value="Dcc"/>
</dbReference>
<dbReference type="VEuPathDB" id="HostDB:ENSMUSG00000060534"/>
<dbReference type="eggNOG" id="KOG4221">
    <property type="taxonomic scope" value="Eukaryota"/>
</dbReference>
<dbReference type="GeneTree" id="ENSGT00940000158867"/>
<dbReference type="HOGENOM" id="CLU_004256_0_0_1"/>
<dbReference type="InParanoid" id="P70211"/>
<dbReference type="OMA" id="GGDHAYW"/>
<dbReference type="OrthoDB" id="114660at2759"/>
<dbReference type="PhylomeDB" id="P70211"/>
<dbReference type="TreeFam" id="TF321506"/>
<dbReference type="Reactome" id="R-MMU-373752">
    <property type="pathway name" value="Netrin-1 signaling"/>
</dbReference>
<dbReference type="Reactome" id="R-MMU-418885">
    <property type="pathway name" value="DCC mediated attractive signaling"/>
</dbReference>
<dbReference type="Reactome" id="R-MMU-418889">
    <property type="pathway name" value="Caspase activation via Dependence Receptors in the absence of ligand"/>
</dbReference>
<dbReference type="BioGRID-ORCS" id="13176">
    <property type="hits" value="3 hits in 76 CRISPR screens"/>
</dbReference>
<dbReference type="ChiTaRS" id="Dcc">
    <property type="organism name" value="mouse"/>
</dbReference>
<dbReference type="EvolutionaryTrace" id="P70211"/>
<dbReference type="PRO" id="PR:P70211"/>
<dbReference type="Proteomes" id="UP000000589">
    <property type="component" value="Chromosome 18"/>
</dbReference>
<dbReference type="RNAct" id="P70211">
    <property type="molecule type" value="protein"/>
</dbReference>
<dbReference type="Bgee" id="ENSMUSG00000060534">
    <property type="expression patterns" value="Expressed in cortical plate and 134 other cell types or tissues"/>
</dbReference>
<dbReference type="GO" id="GO:0030424">
    <property type="term" value="C:axon"/>
    <property type="evidence" value="ECO:0000314"/>
    <property type="project" value="MGI"/>
</dbReference>
<dbReference type="GO" id="GO:0005886">
    <property type="term" value="C:plasma membrane"/>
    <property type="evidence" value="ECO:0000304"/>
    <property type="project" value="Reactome"/>
</dbReference>
<dbReference type="GO" id="GO:0098839">
    <property type="term" value="C:postsynaptic density membrane"/>
    <property type="evidence" value="ECO:0000314"/>
    <property type="project" value="SynGO"/>
</dbReference>
<dbReference type="GO" id="GO:0098685">
    <property type="term" value="C:Schaffer collateral - CA1 synapse"/>
    <property type="evidence" value="ECO:0000314"/>
    <property type="project" value="SynGO"/>
</dbReference>
<dbReference type="GO" id="GO:0033564">
    <property type="term" value="P:anterior/posterior axon guidance"/>
    <property type="evidence" value="ECO:0000315"/>
    <property type="project" value="MGI"/>
</dbReference>
<dbReference type="GO" id="GO:0006915">
    <property type="term" value="P:apoptotic process"/>
    <property type="evidence" value="ECO:0007669"/>
    <property type="project" value="UniProtKB-KW"/>
</dbReference>
<dbReference type="GO" id="GO:0033563">
    <property type="term" value="P:dorsal/ventral axon guidance"/>
    <property type="evidence" value="ECO:0000315"/>
    <property type="project" value="MGI"/>
</dbReference>
<dbReference type="GO" id="GO:0001764">
    <property type="term" value="P:neuron migration"/>
    <property type="evidence" value="ECO:0000315"/>
    <property type="project" value="MGI"/>
</dbReference>
<dbReference type="GO" id="GO:0099170">
    <property type="term" value="P:postsynaptic modulation of chemical synaptic transmission"/>
    <property type="evidence" value="ECO:0000314"/>
    <property type="project" value="SynGO"/>
</dbReference>
<dbReference type="GO" id="GO:0021965">
    <property type="term" value="P:spinal cord ventral commissure morphogenesis"/>
    <property type="evidence" value="ECO:0000315"/>
    <property type="project" value="MGI"/>
</dbReference>
<dbReference type="CDD" id="cd00063">
    <property type="entry name" value="FN3"/>
    <property type="match status" value="6"/>
</dbReference>
<dbReference type="CDD" id="cd00096">
    <property type="entry name" value="Ig"/>
    <property type="match status" value="1"/>
</dbReference>
<dbReference type="CDD" id="cd05722">
    <property type="entry name" value="IgI_1_Neogenin_like"/>
    <property type="match status" value="1"/>
</dbReference>
<dbReference type="CDD" id="cd05723">
    <property type="entry name" value="IgI_4_Neogenin_like"/>
    <property type="match status" value="1"/>
</dbReference>
<dbReference type="FunFam" id="2.60.40.10:FF:003668">
    <property type="match status" value="1"/>
</dbReference>
<dbReference type="FunFam" id="2.60.40.10:FF:000004">
    <property type="entry name" value="DCC isoform 1"/>
    <property type="match status" value="3"/>
</dbReference>
<dbReference type="FunFam" id="2.60.40.10:FF:000101">
    <property type="entry name" value="Neogenin isoform 1"/>
    <property type="match status" value="1"/>
</dbReference>
<dbReference type="FunFam" id="2.60.40.10:FF:000106">
    <property type="entry name" value="Neogenin isoform 1"/>
    <property type="match status" value="1"/>
</dbReference>
<dbReference type="FunFam" id="2.60.40.10:FF:000133">
    <property type="entry name" value="Neogenin isoform 1"/>
    <property type="match status" value="1"/>
</dbReference>
<dbReference type="FunFam" id="2.60.40.10:FF:000189">
    <property type="entry name" value="Neogenin isoform 3"/>
    <property type="match status" value="1"/>
</dbReference>
<dbReference type="FunFam" id="2.60.40.10:FF:000216">
    <property type="entry name" value="neogenin isoform X1"/>
    <property type="match status" value="1"/>
</dbReference>
<dbReference type="FunFam" id="2.60.40.10:FF:000187">
    <property type="entry name" value="neogenin isoform X2"/>
    <property type="match status" value="1"/>
</dbReference>
<dbReference type="Gene3D" id="2.60.40.10">
    <property type="entry name" value="Immunoglobulins"/>
    <property type="match status" value="10"/>
</dbReference>
<dbReference type="InterPro" id="IPR003961">
    <property type="entry name" value="FN3_dom"/>
</dbReference>
<dbReference type="InterPro" id="IPR036116">
    <property type="entry name" value="FN3_sf"/>
</dbReference>
<dbReference type="InterPro" id="IPR007110">
    <property type="entry name" value="Ig-like_dom"/>
</dbReference>
<dbReference type="InterPro" id="IPR036179">
    <property type="entry name" value="Ig-like_dom_sf"/>
</dbReference>
<dbReference type="InterPro" id="IPR013783">
    <property type="entry name" value="Ig-like_fold"/>
</dbReference>
<dbReference type="InterPro" id="IPR013098">
    <property type="entry name" value="Ig_I-set"/>
</dbReference>
<dbReference type="InterPro" id="IPR003599">
    <property type="entry name" value="Ig_sub"/>
</dbReference>
<dbReference type="InterPro" id="IPR003598">
    <property type="entry name" value="Ig_sub2"/>
</dbReference>
<dbReference type="InterPro" id="IPR010560">
    <property type="entry name" value="Neogenin_C"/>
</dbReference>
<dbReference type="PANTHER" id="PTHR44170:SF8">
    <property type="entry name" value="NETRIN RECEPTOR DCC"/>
    <property type="match status" value="1"/>
</dbReference>
<dbReference type="PANTHER" id="PTHR44170">
    <property type="entry name" value="PROTEIN SIDEKICK"/>
    <property type="match status" value="1"/>
</dbReference>
<dbReference type="Pfam" id="PF00041">
    <property type="entry name" value="fn3"/>
    <property type="match status" value="6"/>
</dbReference>
<dbReference type="Pfam" id="PF07679">
    <property type="entry name" value="I-set"/>
    <property type="match status" value="3"/>
</dbReference>
<dbReference type="Pfam" id="PF13895">
    <property type="entry name" value="Ig_2"/>
    <property type="match status" value="1"/>
</dbReference>
<dbReference type="Pfam" id="PF06583">
    <property type="entry name" value="Neogenin_C"/>
    <property type="match status" value="1"/>
</dbReference>
<dbReference type="PRINTS" id="PR00014">
    <property type="entry name" value="FNTYPEIII"/>
</dbReference>
<dbReference type="SMART" id="SM00060">
    <property type="entry name" value="FN3"/>
    <property type="match status" value="6"/>
</dbReference>
<dbReference type="SMART" id="SM00409">
    <property type="entry name" value="IG"/>
    <property type="match status" value="5"/>
</dbReference>
<dbReference type="SMART" id="SM00408">
    <property type="entry name" value="IGc2"/>
    <property type="match status" value="4"/>
</dbReference>
<dbReference type="SUPFAM" id="SSF49265">
    <property type="entry name" value="Fibronectin type III"/>
    <property type="match status" value="4"/>
</dbReference>
<dbReference type="SUPFAM" id="SSF48726">
    <property type="entry name" value="Immunoglobulin"/>
    <property type="match status" value="4"/>
</dbReference>
<dbReference type="PROSITE" id="PS50853">
    <property type="entry name" value="FN3"/>
    <property type="match status" value="6"/>
</dbReference>
<dbReference type="PROSITE" id="PS50835">
    <property type="entry name" value="IG_LIKE"/>
    <property type="match status" value="4"/>
</dbReference>
<sequence>MENSLGCVWVPKLAFVLFGASLLSAHLQVTGFQIKPFTSLHFVSEPSDAVTMRGGNVLLNCSAESDRGVPVIKWKKDGLILALGMDDRKQQLPNGSLLIQNILHSRHHKPDEGLYQCEASLADSGSIISRTAKVTVAGPLRFLSQTESITAFMGDTVLLKCEVIGEPMPTIHWQKNQQDLNPLPGDSRVVVLPSGALQISRLQPGDSGVYRCSARNPASIRTGNEAEVRILSDPGLHRQLYFLQRPSNVIAIEGKDAVLECCVSGYPPPSFTWLRGEEVIQLRSKKYSLLGGSNLLISNVTDDDSGTYTCVVTYKNENISASAELTVLVPPWFLNHPSNLYAYESMDIEFECAVSGKPVPTVNWMKNGDVVIPSDYFQIVGGSNLRILGVVKSDEGFYQCVAENEAGNAQSSAQLIVPKPAIPSSSILPSAPRDVLPVLVSSRFVRLSWRPPAEAKGNIQTFTVFFSREGDNRERALNTTQPGSLQLTVGNLKPEAMYTFRVVAYNEWGPGESSQPIKVATQPELQVPGPVENLHAVSTSPTSILITWEPPAYANGPVQGYRLFCTEVSTGKEQNIEVDGLSYKLEGLKKFTEYTLRFLAYNRYGPGVSTDDITVVTLSDVPSAPPQNISLEVVNSRSIKVSWLPPPSGTQNGFITGYKIRHRKTTRRGEMETLEPNNLWYLFTGLEKGSQYSFQVSAMTVNGTGPPSNWYTAETPENDLDESQVPDQPSSLHVRPQTNCIIMSWTPPLNPNIVVRGYIIGYGVGSPYAETVRVDSKQRYYSIERLESSSHYVISLKAFNNAGEGVPLYESATTRSITDPTDPVDYYPLLDDFPTSGPDVSTPMLPPVGVQAVALTHEAVRVSWADNSVPKNQKTSDVRLYTVRWRTSFSASAKYKSEDTTSLSYTATGLKPNTMYEFSVMVTKNRRSSTWSMTAHATTYEAAPTSAPKDLTVITREGKPRAVIVSWQPPLEANGKITAYILFYTLDKNIPIDDWIMETISGDRLTHQIMDLSLDTMYYFRIQARNVKGVGPLSDPILFRTLKVEHPDKMANDQGRHGDGGYWPVDTNLIDRSTLNEPPIGQMHPPHGSVTPQKNSNLLVITVVTVGVLTVLVVVIVAVICTRRSSAQQRKKRATHSVSKRKGSQKDLRPPDLWIHHEEMEMKNIEKPTGTDPAGRDSPIQSCQDLTPVSHSQSETQMGSKSASHSGQDTEDAGSSMSTLERSLAARRATRAKLMIPMEAQSSNPAVVSAIPVPTLESAQYPGILPSPTCGYPHPQFTLRPVPFPTLSVDRGFGAGRTQSVSEGPTTQQQPMLPPAQPEHPSSEEAPSRTIPTACVRPTHPLRSFANPLLPPPMSAIEPKVPYTPLLSQPGPTLPKTHVKTASLGLAGKARSPLLPVSVPTAPEVSEESHKPTEDPASVYEQDDLSEQMASLEGLMKQLNAITGSAF</sequence>
<gene>
    <name type="primary">Dcc</name>
</gene>
<keyword id="KW-0002">3D-structure</keyword>
<keyword id="KW-0024">Alternative initiation</keyword>
<keyword id="KW-0025">Alternative splicing</keyword>
<keyword id="KW-0053">Apoptosis</keyword>
<keyword id="KW-0217">Developmental protein</keyword>
<keyword id="KW-1015">Disulfide bond</keyword>
<keyword id="KW-0325">Glycoprotein</keyword>
<keyword id="KW-0393">Immunoglobulin domain</keyword>
<keyword id="KW-0472">Membrane</keyword>
<keyword id="KW-0597">Phosphoprotein</keyword>
<keyword id="KW-0675">Receptor</keyword>
<keyword id="KW-1185">Reference proteome</keyword>
<keyword id="KW-0677">Repeat</keyword>
<keyword id="KW-0732">Signal</keyword>
<keyword id="KW-0812">Transmembrane</keyword>
<keyword id="KW-1133">Transmembrane helix</keyword>
<keyword id="KW-0043">Tumor suppressor</keyword>
<keyword id="KW-0832">Ubl conjugation</keyword>
<protein>
    <recommendedName>
        <fullName>Netrin receptor DCC</fullName>
    </recommendedName>
    <alternativeName>
        <fullName>Tumor suppressor protein DCC</fullName>
    </alternativeName>
</protein>
<organism>
    <name type="scientific">Mus musculus</name>
    <name type="common">Mouse</name>
    <dbReference type="NCBI Taxonomy" id="10090"/>
    <lineage>
        <taxon>Eukaryota</taxon>
        <taxon>Metazoa</taxon>
        <taxon>Chordata</taxon>
        <taxon>Craniata</taxon>
        <taxon>Vertebrata</taxon>
        <taxon>Euteleostomi</taxon>
        <taxon>Mammalia</taxon>
        <taxon>Eutheria</taxon>
        <taxon>Euarchontoglires</taxon>
        <taxon>Glires</taxon>
        <taxon>Rodentia</taxon>
        <taxon>Myomorpha</taxon>
        <taxon>Muroidea</taxon>
        <taxon>Muridae</taxon>
        <taxon>Murinae</taxon>
        <taxon>Mus</taxon>
        <taxon>Mus</taxon>
    </lineage>
</organism>
<accession>P70211</accession>
<accession>G3X9X6</accession>
<proteinExistence type="evidence at protein level"/>